<name>PSBA_MAIZE</name>
<feature type="initiator methionine" description="Removed" evidence="2">
    <location>
        <position position="1"/>
    </location>
</feature>
<feature type="chain" id="PRO_0000090449" description="Photosystem II protein D1" evidence="1">
    <location>
        <begin position="2"/>
        <end position="344"/>
    </location>
</feature>
<feature type="propeptide" id="PRO_0000316490" evidence="1">
    <location>
        <begin position="345"/>
        <end position="353"/>
    </location>
</feature>
<feature type="transmembrane region" description="Helical" evidence="1">
    <location>
        <begin position="29"/>
        <end position="46"/>
    </location>
</feature>
<feature type="transmembrane region" description="Helical" evidence="1">
    <location>
        <begin position="118"/>
        <end position="133"/>
    </location>
</feature>
<feature type="transmembrane region" description="Helical" evidence="1">
    <location>
        <begin position="142"/>
        <end position="156"/>
    </location>
</feature>
<feature type="transmembrane region" description="Helical" evidence="1">
    <location>
        <begin position="197"/>
        <end position="218"/>
    </location>
</feature>
<feature type="transmembrane region" description="Helical" evidence="1">
    <location>
        <begin position="274"/>
        <end position="288"/>
    </location>
</feature>
<feature type="binding site" description="axial binding residue" evidence="1">
    <location>
        <position position="118"/>
    </location>
    <ligand>
        <name>chlorophyll a</name>
        <dbReference type="ChEBI" id="CHEBI:58416"/>
        <label>ChlzD1</label>
    </ligand>
    <ligandPart>
        <name>Mg</name>
        <dbReference type="ChEBI" id="CHEBI:25107"/>
    </ligandPart>
</feature>
<feature type="binding site" evidence="1">
    <location>
        <position position="126"/>
    </location>
    <ligand>
        <name>pheophytin a</name>
        <dbReference type="ChEBI" id="CHEBI:136840"/>
        <label>D1</label>
    </ligand>
</feature>
<feature type="binding site" evidence="1">
    <location>
        <position position="170"/>
    </location>
    <ligand>
        <name>[CaMn4O5] cluster</name>
        <dbReference type="ChEBI" id="CHEBI:189552"/>
    </ligand>
</feature>
<feature type="binding site" evidence="1">
    <location>
        <position position="189"/>
    </location>
    <ligand>
        <name>[CaMn4O5] cluster</name>
        <dbReference type="ChEBI" id="CHEBI:189552"/>
    </ligand>
</feature>
<feature type="binding site" description="axial binding residue" evidence="1">
    <location>
        <position position="198"/>
    </location>
    <ligand>
        <name>chlorophyll a</name>
        <dbReference type="ChEBI" id="CHEBI:58416"/>
        <label>PD1</label>
    </ligand>
    <ligandPart>
        <name>Mg</name>
        <dbReference type="ChEBI" id="CHEBI:25107"/>
    </ligandPart>
</feature>
<feature type="binding site" evidence="1">
    <location>
        <position position="215"/>
    </location>
    <ligand>
        <name>a quinone</name>
        <dbReference type="ChEBI" id="CHEBI:132124"/>
        <label>B</label>
    </ligand>
</feature>
<feature type="binding site" evidence="1">
    <location>
        <position position="215"/>
    </location>
    <ligand>
        <name>Fe cation</name>
        <dbReference type="ChEBI" id="CHEBI:24875"/>
        <note>ligand shared with heterodimeric partner</note>
    </ligand>
</feature>
<feature type="binding site" evidence="1">
    <location>
        <begin position="264"/>
        <end position="265"/>
    </location>
    <ligand>
        <name>a quinone</name>
        <dbReference type="ChEBI" id="CHEBI:132124"/>
        <label>B</label>
    </ligand>
</feature>
<feature type="binding site" evidence="1">
    <location>
        <position position="272"/>
    </location>
    <ligand>
        <name>Fe cation</name>
        <dbReference type="ChEBI" id="CHEBI:24875"/>
        <note>ligand shared with heterodimeric partner</note>
    </ligand>
</feature>
<feature type="binding site" evidence="1">
    <location>
        <position position="332"/>
    </location>
    <ligand>
        <name>[CaMn4O5] cluster</name>
        <dbReference type="ChEBI" id="CHEBI:189552"/>
    </ligand>
</feature>
<feature type="binding site" evidence="1">
    <location>
        <position position="333"/>
    </location>
    <ligand>
        <name>[CaMn4O5] cluster</name>
        <dbReference type="ChEBI" id="CHEBI:189552"/>
    </ligand>
</feature>
<feature type="binding site" evidence="1">
    <location>
        <position position="342"/>
    </location>
    <ligand>
        <name>[CaMn4O5] cluster</name>
        <dbReference type="ChEBI" id="CHEBI:189552"/>
    </ligand>
</feature>
<feature type="binding site" evidence="1">
    <location>
        <position position="344"/>
    </location>
    <ligand>
        <name>[CaMn4O5] cluster</name>
        <dbReference type="ChEBI" id="CHEBI:189552"/>
    </ligand>
</feature>
<feature type="site" description="Tyrosine radical intermediate" evidence="1">
    <location>
        <position position="161"/>
    </location>
</feature>
<feature type="site" description="Stabilizes free radical intermediate" evidence="1">
    <location>
        <position position="190"/>
    </location>
</feature>
<feature type="site" description="Cleavage; by CTPA" evidence="1">
    <location>
        <begin position="344"/>
        <end position="345"/>
    </location>
</feature>
<feature type="modified residue" description="N-acetylthreonine" evidence="1 2">
    <location>
        <position position="2"/>
    </location>
</feature>
<feature type="modified residue" description="Phosphothreonine" evidence="1 2">
    <location>
        <position position="2"/>
    </location>
</feature>
<comment type="function">
    <text evidence="1">Photosystem II (PSII) is a light-driven water:plastoquinone oxidoreductase that uses light energy to abstract electrons from H(2)O, generating O(2) and a proton gradient subsequently used for ATP formation. It consists of a core antenna complex that captures photons, and an electron transfer chain that converts photonic excitation into a charge separation. The D1/D2 (PsbA/PsbD) reaction center heterodimer binds P680, the primary electron donor of PSII as well as several subsequent electron acceptors.</text>
</comment>
<comment type="catalytic activity">
    <reaction evidence="1">
        <text>2 a plastoquinone + 4 hnu + 2 H2O = 2 a plastoquinol + O2</text>
        <dbReference type="Rhea" id="RHEA:36359"/>
        <dbReference type="Rhea" id="RHEA-COMP:9561"/>
        <dbReference type="Rhea" id="RHEA-COMP:9562"/>
        <dbReference type="ChEBI" id="CHEBI:15377"/>
        <dbReference type="ChEBI" id="CHEBI:15379"/>
        <dbReference type="ChEBI" id="CHEBI:17757"/>
        <dbReference type="ChEBI" id="CHEBI:30212"/>
        <dbReference type="ChEBI" id="CHEBI:62192"/>
        <dbReference type="EC" id="1.10.3.9"/>
    </reaction>
</comment>
<comment type="cofactor">
    <text evidence="1">The D1/D2 heterodimer binds P680, chlorophylls that are the primary electron donor of PSII, and subsequent electron acceptors. It shares a non-heme iron and each subunit binds pheophytin, quinone, additional chlorophylls, carotenoids and lipids. D1 provides most of the ligands for the Mn4-Ca-O5 cluster of the oxygen-evolving complex (OEC). There is also a Cl(-1) ion associated with D1 and D2, which is required for oxygen evolution. The PSII complex binds additional chlorophylls, carotenoids and specific lipids.</text>
</comment>
<comment type="subunit">
    <text evidence="1">PSII is composed of 1 copy each of membrane proteins PsbA, PsbB, PsbC, PsbD, PsbE, PsbF, PsbH, PsbI, PsbJ, PsbK, PsbL, PsbM, PsbT, PsbX, PsbY, PsbZ, Psb30/Ycf12, at least 3 peripheral proteins of the oxygen-evolving complex and a large number of cofactors. It forms dimeric complexes.</text>
</comment>
<comment type="subcellular location">
    <subcellularLocation>
        <location evidence="1 2">Plastid</location>
        <location evidence="1 2">Chloroplast thylakoid membrane</location>
        <topology evidence="1">Multi-pass membrane protein</topology>
    </subcellularLocation>
    <text evidence="2">PSII is more abundant in mesophyll than bundle sheath cells and more abundant in grana than stroma lamellae in mesophyll cells.</text>
</comment>
<comment type="PTM">
    <text evidence="2">Phosphorylated in both bundle sheath and mesophyll cells, phosphorylation increases when cells are grown under high rather than low light regimes (70 vs 900 umol photons/m-2/s).</text>
</comment>
<comment type="PTM">
    <text evidence="2">PSII is subject to light-induced damage, in particular to D1. Damaged protein is degraded by Deg1 and FtsH proteases and replaced. In maize mesophyll cells D1 degradation is less extensive in grana (stacked) vs stroma (unstacked) lamellae, in part due to exclusion of FtsH from the grana. D1 degradation is faster in bundle sheath cells.</text>
</comment>
<comment type="PTM">
    <text evidence="1">Tyr-161 forms a radical intermediate that is referred to as redox-active TyrZ, YZ or Y-Z.</text>
</comment>
<comment type="PTM">
    <text evidence="1">C-terminally processed by CTPA; processing is essential to allow assembly of the oxygen-evolving complex and thus photosynthetic growth.</text>
</comment>
<comment type="miscellaneous">
    <text evidence="1">2 of the reaction center chlorophylls (ChlD1 and ChlD2) are entirely coordinated by water.</text>
</comment>
<comment type="miscellaneous">
    <text evidence="1">Herbicides such as atrazine, BNT, diuron or ioxynil bind in the Q(B) binding site and block subsequent electron transfer.</text>
</comment>
<comment type="similarity">
    <text evidence="1">Belongs to the reaction center PufL/M/PsbA/D family.</text>
</comment>
<keyword id="KW-0007">Acetylation</keyword>
<keyword id="KW-0106">Calcium</keyword>
<keyword id="KW-0148">Chlorophyll</keyword>
<keyword id="KW-0150">Chloroplast</keyword>
<keyword id="KW-0157">Chromophore</keyword>
<keyword id="KW-0903">Direct protein sequencing</keyword>
<keyword id="KW-0249">Electron transport</keyword>
<keyword id="KW-0359">Herbicide resistance</keyword>
<keyword id="KW-0408">Iron</keyword>
<keyword id="KW-0460">Magnesium</keyword>
<keyword id="KW-0464">Manganese</keyword>
<keyword id="KW-0472">Membrane</keyword>
<keyword id="KW-0479">Metal-binding</keyword>
<keyword id="KW-0560">Oxidoreductase</keyword>
<keyword id="KW-0597">Phosphoprotein</keyword>
<keyword id="KW-0602">Photosynthesis</keyword>
<keyword id="KW-0604">Photosystem II</keyword>
<keyword id="KW-0934">Plastid</keyword>
<keyword id="KW-1185">Reference proteome</keyword>
<keyword id="KW-0793">Thylakoid</keyword>
<keyword id="KW-0812">Transmembrane</keyword>
<keyword id="KW-1133">Transmembrane helix</keyword>
<keyword id="KW-0813">Transport</keyword>
<gene>
    <name evidence="1" type="primary">psbA</name>
</gene>
<proteinExistence type="evidence at protein level"/>
<dbReference type="EC" id="1.10.3.9" evidence="1"/>
<dbReference type="EMBL" id="AF543684">
    <property type="protein sequence ID" value="AAN33184.1"/>
    <property type="molecule type" value="Genomic_DNA"/>
</dbReference>
<dbReference type="EMBL" id="X86563">
    <property type="protein sequence ID" value="CAA60265.1"/>
    <property type="molecule type" value="Genomic_DNA"/>
</dbReference>
<dbReference type="PIR" id="S58531">
    <property type="entry name" value="S58531"/>
</dbReference>
<dbReference type="RefSeq" id="NP_043004.1">
    <property type="nucleotide sequence ID" value="NC_001666.2"/>
</dbReference>
<dbReference type="SMR" id="P48183"/>
<dbReference type="FunCoup" id="P48183">
    <property type="interactions" value="466"/>
</dbReference>
<dbReference type="STRING" id="4577.P48183"/>
<dbReference type="iPTMnet" id="P48183"/>
<dbReference type="PaxDb" id="4577-GRMZM5G844143_P01"/>
<dbReference type="EnsemblPlants" id="Zm00001eb435340_T001">
    <property type="protein sequence ID" value="Zm00001eb435340_P001"/>
    <property type="gene ID" value="Zm00001eb435340"/>
</dbReference>
<dbReference type="EnsemblPlants" id="Zm00001eb435620_T001">
    <property type="protein sequence ID" value="Zm00001eb435620_P001"/>
    <property type="gene ID" value="Zm00001eb435620"/>
</dbReference>
<dbReference type="EnsemblPlants" id="Zm00001eb436890_T001">
    <property type="protein sequence ID" value="Zm00001eb436890_P001"/>
    <property type="gene ID" value="Zm00001eb436890"/>
</dbReference>
<dbReference type="EnsemblPlants" id="Zm00001eb437100_T001">
    <property type="protein sequence ID" value="Zm00001eb437100_P001"/>
    <property type="gene ID" value="Zm00001eb437100"/>
</dbReference>
<dbReference type="EnsemblPlants" id="Zm00001eb437310_T001">
    <property type="protein sequence ID" value="Zm00001eb437310_P001"/>
    <property type="gene ID" value="Zm00001eb437310"/>
</dbReference>
<dbReference type="EnsemblPlants" id="Zm00001eb437750_T001">
    <property type="protein sequence ID" value="Zm00001eb437750_P001"/>
    <property type="gene ID" value="Zm00001eb437750"/>
</dbReference>
<dbReference type="EnsemblPlants" id="Zm00001eb438280_T001">
    <property type="protein sequence ID" value="Zm00001eb438280_P001"/>
    <property type="gene ID" value="Zm00001eb438280"/>
</dbReference>
<dbReference type="EnsemblPlants" id="Zm00001eb438290_T001">
    <property type="protein sequence ID" value="Zm00001eb438290_P001"/>
    <property type="gene ID" value="Zm00001eb438290"/>
</dbReference>
<dbReference type="EnsemblPlants" id="Zm00001eb439910_T001">
    <property type="protein sequence ID" value="Zm00001eb439910_P001"/>
    <property type="gene ID" value="Zm00001eb439910"/>
</dbReference>
<dbReference type="EnsemblPlants" id="Zm00001eb441950_T001">
    <property type="protein sequence ID" value="Zm00001eb441950_P001"/>
    <property type="gene ID" value="Zm00001eb441950"/>
</dbReference>
<dbReference type="EnsemblPlants" id="Zm00001eb442710_T001">
    <property type="protein sequence ID" value="Zm00001eb442710_P001"/>
    <property type="gene ID" value="Zm00001eb442710"/>
</dbReference>
<dbReference type="EnsemblPlants" id="Zm00001eb442990_T001">
    <property type="protein sequence ID" value="Zm00001eb442990_P001"/>
    <property type="gene ID" value="Zm00001eb442990"/>
</dbReference>
<dbReference type="GeneID" id="845199"/>
<dbReference type="Gramene" id="Zm00001eb435340_T001">
    <property type="protein sequence ID" value="Zm00001eb435340_P001"/>
    <property type="gene ID" value="Zm00001eb435340"/>
</dbReference>
<dbReference type="Gramene" id="Zm00001eb435620_T001">
    <property type="protein sequence ID" value="Zm00001eb435620_P001"/>
    <property type="gene ID" value="Zm00001eb435620"/>
</dbReference>
<dbReference type="Gramene" id="Zm00001eb436890_T001">
    <property type="protein sequence ID" value="Zm00001eb436890_P001"/>
    <property type="gene ID" value="Zm00001eb436890"/>
</dbReference>
<dbReference type="Gramene" id="Zm00001eb437100_T001">
    <property type="protein sequence ID" value="Zm00001eb437100_P001"/>
    <property type="gene ID" value="Zm00001eb437100"/>
</dbReference>
<dbReference type="Gramene" id="Zm00001eb437310_T001">
    <property type="protein sequence ID" value="Zm00001eb437310_P001"/>
    <property type="gene ID" value="Zm00001eb437310"/>
</dbReference>
<dbReference type="Gramene" id="Zm00001eb437750_T001">
    <property type="protein sequence ID" value="Zm00001eb437750_P001"/>
    <property type="gene ID" value="Zm00001eb437750"/>
</dbReference>
<dbReference type="Gramene" id="Zm00001eb438280_T001">
    <property type="protein sequence ID" value="Zm00001eb438280_P001"/>
    <property type="gene ID" value="Zm00001eb438280"/>
</dbReference>
<dbReference type="Gramene" id="Zm00001eb438290_T001">
    <property type="protein sequence ID" value="Zm00001eb438290_P001"/>
    <property type="gene ID" value="Zm00001eb438290"/>
</dbReference>
<dbReference type="Gramene" id="Zm00001eb439910_T001">
    <property type="protein sequence ID" value="Zm00001eb439910_P001"/>
    <property type="gene ID" value="Zm00001eb439910"/>
</dbReference>
<dbReference type="Gramene" id="Zm00001eb441950_T001">
    <property type="protein sequence ID" value="Zm00001eb441950_P001"/>
    <property type="gene ID" value="Zm00001eb441950"/>
</dbReference>
<dbReference type="Gramene" id="Zm00001eb442710_T001">
    <property type="protein sequence ID" value="Zm00001eb442710_P001"/>
    <property type="gene ID" value="Zm00001eb442710"/>
</dbReference>
<dbReference type="Gramene" id="Zm00001eb442990_T001">
    <property type="protein sequence ID" value="Zm00001eb442990_P001"/>
    <property type="gene ID" value="Zm00001eb442990"/>
</dbReference>
<dbReference type="KEGG" id="zma:845199"/>
<dbReference type="MaizeGDB" id="105976"/>
<dbReference type="eggNOG" id="ENOG502QR09">
    <property type="taxonomic scope" value="Eukaryota"/>
</dbReference>
<dbReference type="InParanoid" id="P48183"/>
<dbReference type="OMA" id="CQWVTDT"/>
<dbReference type="OrthoDB" id="1911105at2759"/>
<dbReference type="Proteomes" id="UP000007305">
    <property type="component" value="Chloroplast"/>
</dbReference>
<dbReference type="ExpressionAtlas" id="P48183">
    <property type="expression patterns" value="baseline and differential"/>
</dbReference>
<dbReference type="GO" id="GO:0009535">
    <property type="term" value="C:chloroplast thylakoid membrane"/>
    <property type="evidence" value="ECO:0007669"/>
    <property type="project" value="UniProtKB-SubCell"/>
</dbReference>
<dbReference type="GO" id="GO:0009523">
    <property type="term" value="C:photosystem II"/>
    <property type="evidence" value="ECO:0000318"/>
    <property type="project" value="GO_Central"/>
</dbReference>
<dbReference type="GO" id="GO:0016168">
    <property type="term" value="F:chlorophyll binding"/>
    <property type="evidence" value="ECO:0007669"/>
    <property type="project" value="UniProtKB-UniRule"/>
</dbReference>
<dbReference type="GO" id="GO:0045156">
    <property type="term" value="F:electron transporter, transferring electrons within the cyclic electron transport pathway of photosynthesis activity"/>
    <property type="evidence" value="ECO:0007669"/>
    <property type="project" value="InterPro"/>
</dbReference>
<dbReference type="GO" id="GO:0005506">
    <property type="term" value="F:iron ion binding"/>
    <property type="evidence" value="ECO:0007669"/>
    <property type="project" value="UniProtKB-UniRule"/>
</dbReference>
<dbReference type="GO" id="GO:0016682">
    <property type="term" value="F:oxidoreductase activity, acting on diphenols and related substances as donors, oxygen as acceptor"/>
    <property type="evidence" value="ECO:0007669"/>
    <property type="project" value="UniProtKB-UniRule"/>
</dbReference>
<dbReference type="GO" id="GO:0010242">
    <property type="term" value="F:oxygen evolving activity"/>
    <property type="evidence" value="ECO:0007669"/>
    <property type="project" value="UniProtKB-EC"/>
</dbReference>
<dbReference type="GO" id="GO:0009772">
    <property type="term" value="P:photosynthetic electron transport in photosystem II"/>
    <property type="evidence" value="ECO:0007669"/>
    <property type="project" value="InterPro"/>
</dbReference>
<dbReference type="GO" id="GO:0009635">
    <property type="term" value="P:response to herbicide"/>
    <property type="evidence" value="ECO:0007669"/>
    <property type="project" value="UniProtKB-KW"/>
</dbReference>
<dbReference type="CDD" id="cd09289">
    <property type="entry name" value="Photosystem-II_D1"/>
    <property type="match status" value="1"/>
</dbReference>
<dbReference type="FunFam" id="1.20.85.10:FF:000002">
    <property type="entry name" value="Photosystem II protein D1"/>
    <property type="match status" value="1"/>
</dbReference>
<dbReference type="Gene3D" id="1.20.85.10">
    <property type="entry name" value="Photosystem II protein D1-like"/>
    <property type="match status" value="1"/>
</dbReference>
<dbReference type="HAMAP" id="MF_01379">
    <property type="entry name" value="PSII_PsbA_D1"/>
    <property type="match status" value="1"/>
</dbReference>
<dbReference type="InterPro" id="IPR055266">
    <property type="entry name" value="D1/D2"/>
</dbReference>
<dbReference type="InterPro" id="IPR036854">
    <property type="entry name" value="Photo_II_D1/D2_sf"/>
</dbReference>
<dbReference type="InterPro" id="IPR000484">
    <property type="entry name" value="Photo_RC_L/M"/>
</dbReference>
<dbReference type="InterPro" id="IPR055265">
    <property type="entry name" value="Photo_RC_L/M_CS"/>
</dbReference>
<dbReference type="InterPro" id="IPR005867">
    <property type="entry name" value="PSII_D1"/>
</dbReference>
<dbReference type="NCBIfam" id="TIGR01151">
    <property type="entry name" value="psbA"/>
    <property type="match status" value="1"/>
</dbReference>
<dbReference type="PANTHER" id="PTHR33149">
    <property type="entry name" value="PHOTOSYSTEM II PROTEIN D1"/>
    <property type="match status" value="1"/>
</dbReference>
<dbReference type="PANTHER" id="PTHR33149:SF58">
    <property type="entry name" value="PHOTOSYSTEM II PROTEIN D1"/>
    <property type="match status" value="1"/>
</dbReference>
<dbReference type="Pfam" id="PF00124">
    <property type="entry name" value="Photo_RC"/>
    <property type="match status" value="1"/>
</dbReference>
<dbReference type="PRINTS" id="PR00256">
    <property type="entry name" value="REACTNCENTRE"/>
</dbReference>
<dbReference type="SUPFAM" id="SSF81483">
    <property type="entry name" value="Bacterial photosystem II reaction centre, L and M subunits"/>
    <property type="match status" value="1"/>
</dbReference>
<dbReference type="PROSITE" id="PS00244">
    <property type="entry name" value="REACTION_CENTER"/>
    <property type="match status" value="1"/>
</dbReference>
<evidence type="ECO:0000255" key="1">
    <source>
        <dbReference type="HAMAP-Rule" id="MF_01379"/>
    </source>
</evidence>
<evidence type="ECO:0000269" key="2">
    <source>
    </source>
</evidence>
<evidence type="ECO:0000303" key="3">
    <source ref="1"/>
</evidence>
<sequence length="353" mass="39011">MTAILERRESTSLWGRFCNWITSTENRLYIGWFGVLMIPTLLTATSVFIIAFIAAPPVDIDGIREPVSGSLLYGNNIISGAIIPTSAAIGLHFYPIWEAASVDEWLYNGGPYELIVLHFLLGVACYMGREWELSFRLGMRPWIAVAYSAPVAAATAVFLIYPIGQGSFSDGMPLGISGTFNFMIVFQAEHNILMHPFHMLGVAGVFGGSLFSAMHGSLVTSSLIRETTENESANEGYKFGQEEETYNIVAAHGYFGRLIFQYASFNNSRSLHFFLAAWPVVGIWFTALGISTMAFNLNGFNFNQSVVDSQGRVINTWADIINRANLGMEVMHERNAHNFPLDLAALEVPYLNG</sequence>
<reference key="1">
    <citation type="submission" date="2002-09" db="EMBL/GenBank/DDBJ databases">
        <title>Maize psbA gene encoding the 32 kDa photosystem II protein.</title>
        <authorList>
            <person name="Netto A.P."/>
            <person name="McIntyre D.J."/>
            <person name="Sathasivan K.S."/>
        </authorList>
    </citation>
    <scope>NUCLEOTIDE SEQUENCE [GENOMIC DNA]</scope>
    <source>
        <strain>cv. Surecropper</strain>
    </source>
</reference>
<reference key="2">
    <citation type="journal article" date="1995" name="J. Mol. Biol.">
        <title>Complete sequence of the maize chloroplast genome: gene content, hotspots of divergence and fine tuning of genetic information by transcript editing.</title>
        <authorList>
            <person name="Maier R.M."/>
            <person name="Neckermann K."/>
            <person name="Igloi G.L."/>
            <person name="Koessel H."/>
        </authorList>
    </citation>
    <scope>NUCLEOTIDE SEQUENCE [LARGE SCALE GENOMIC DNA]</scope>
    <source>
        <strain>cv. B73</strain>
    </source>
</reference>
<reference key="3">
    <citation type="journal article" date="2012" name="Proteomics">
        <title>Differential phosphorylation of thylakoid proteins in mesophyll and bundle sheath chloroplasts from maize plants grown under low or high light.</title>
        <authorList>
            <person name="Fristedt R."/>
            <person name="Wasilewska W."/>
            <person name="Romanowska E."/>
            <person name="Vener A.V."/>
        </authorList>
    </citation>
    <scope>PROTEIN SEQUENCE OF 2-8</scope>
    <scope>SUBCELLULAR LOCATION</scope>
    <scope>PROTEOLYTIC CLEAVAGE</scope>
    <scope>PHOSPHORYLATION AT THR-2</scope>
    <scope>ACETYLATION AT THR-2</scope>
    <source>
        <strain>cv. Olenka</strain>
        <tissue>Bundle sheath cell</tissue>
        <tissue>Mesophyll cell</tissue>
    </source>
</reference>
<protein>
    <recommendedName>
        <fullName evidence="1">Photosystem II protein D1</fullName>
        <shortName evidence="1">PSII D1 protein</shortName>
        <ecNumber evidence="1">1.10.3.9</ecNumber>
    </recommendedName>
    <alternativeName>
        <fullName evidence="3">32 kDa thylakoid membrane protein</fullName>
    </alternativeName>
    <alternativeName>
        <fullName evidence="1">Photosystem II Q(B) protein</fullName>
    </alternativeName>
</protein>
<geneLocation type="chloroplast"/>
<accession>P48183</accession>
<accession>Q546V9</accession>
<organism>
    <name type="scientific">Zea mays</name>
    <name type="common">Maize</name>
    <dbReference type="NCBI Taxonomy" id="4577"/>
    <lineage>
        <taxon>Eukaryota</taxon>
        <taxon>Viridiplantae</taxon>
        <taxon>Streptophyta</taxon>
        <taxon>Embryophyta</taxon>
        <taxon>Tracheophyta</taxon>
        <taxon>Spermatophyta</taxon>
        <taxon>Magnoliopsida</taxon>
        <taxon>Liliopsida</taxon>
        <taxon>Poales</taxon>
        <taxon>Poaceae</taxon>
        <taxon>PACMAD clade</taxon>
        <taxon>Panicoideae</taxon>
        <taxon>Andropogonodae</taxon>
        <taxon>Andropogoneae</taxon>
        <taxon>Tripsacinae</taxon>
        <taxon>Zea</taxon>
    </lineage>
</organism>